<sequence>MMELIPQPRTKFLRVQCPECNNEQIVFGSPATVVKCLTCGKVLVEPRGGKGKVKAKILEILG</sequence>
<dbReference type="EMBL" id="L77117">
    <property type="protein sequence ID" value="AAB98237.1"/>
    <property type="molecule type" value="Genomic_DNA"/>
</dbReference>
<dbReference type="PIR" id="C64331">
    <property type="entry name" value="C64331"/>
</dbReference>
<dbReference type="SMR" id="P54028"/>
<dbReference type="FunCoup" id="P54028">
    <property type="interactions" value="131"/>
</dbReference>
<dbReference type="STRING" id="243232.MJ_0250"/>
<dbReference type="PaxDb" id="243232-MJ_0250"/>
<dbReference type="EnsemblBacteria" id="AAB98237">
    <property type="protein sequence ID" value="AAB98237"/>
    <property type="gene ID" value="MJ_0250"/>
</dbReference>
<dbReference type="KEGG" id="mja:MJ_0250"/>
<dbReference type="eggNOG" id="arCOG04108">
    <property type="taxonomic scope" value="Archaea"/>
</dbReference>
<dbReference type="HOGENOM" id="CLU_199465_0_0_2"/>
<dbReference type="InParanoid" id="P54028"/>
<dbReference type="PhylomeDB" id="P54028"/>
<dbReference type="Proteomes" id="UP000000805">
    <property type="component" value="Chromosome"/>
</dbReference>
<dbReference type="GO" id="GO:0022627">
    <property type="term" value="C:cytosolic small ribosomal subunit"/>
    <property type="evidence" value="ECO:0000318"/>
    <property type="project" value="GO_Central"/>
</dbReference>
<dbReference type="GO" id="GO:0003723">
    <property type="term" value="F:RNA binding"/>
    <property type="evidence" value="ECO:0000318"/>
    <property type="project" value="GO_Central"/>
</dbReference>
<dbReference type="GO" id="GO:0003735">
    <property type="term" value="F:structural constituent of ribosome"/>
    <property type="evidence" value="ECO:0000318"/>
    <property type="project" value="GO_Central"/>
</dbReference>
<dbReference type="GO" id="GO:0008270">
    <property type="term" value="F:zinc ion binding"/>
    <property type="evidence" value="ECO:0007669"/>
    <property type="project" value="UniProtKB-UniRule"/>
</dbReference>
<dbReference type="GO" id="GO:0000028">
    <property type="term" value="P:ribosomal small subunit assembly"/>
    <property type="evidence" value="ECO:0000318"/>
    <property type="project" value="GO_Central"/>
</dbReference>
<dbReference type="GO" id="GO:0006412">
    <property type="term" value="P:translation"/>
    <property type="evidence" value="ECO:0007669"/>
    <property type="project" value="UniProtKB-UniRule"/>
</dbReference>
<dbReference type="FunFam" id="2.20.25.100:FF:000002">
    <property type="entry name" value="30S ribosomal protein S27e"/>
    <property type="match status" value="1"/>
</dbReference>
<dbReference type="Gene3D" id="2.20.25.100">
    <property type="entry name" value="Zn-binding ribosomal proteins"/>
    <property type="match status" value="1"/>
</dbReference>
<dbReference type="HAMAP" id="MF_00371">
    <property type="entry name" value="Ribosomal_eS27"/>
    <property type="match status" value="1"/>
</dbReference>
<dbReference type="InterPro" id="IPR000592">
    <property type="entry name" value="Ribosomal_eS27"/>
</dbReference>
<dbReference type="InterPro" id="IPR023407">
    <property type="entry name" value="Ribosomal_eS27_Zn-bd_dom_sf"/>
</dbReference>
<dbReference type="InterPro" id="IPR011332">
    <property type="entry name" value="Ribosomal_zn-bd"/>
</dbReference>
<dbReference type="NCBIfam" id="NF001629">
    <property type="entry name" value="PRK00415.1"/>
    <property type="match status" value="1"/>
</dbReference>
<dbReference type="Pfam" id="PF01667">
    <property type="entry name" value="Ribosomal_S27e"/>
    <property type="match status" value="1"/>
</dbReference>
<dbReference type="SUPFAM" id="SSF57829">
    <property type="entry name" value="Zn-binding ribosomal proteins"/>
    <property type="match status" value="1"/>
</dbReference>
<dbReference type="PROSITE" id="PS01168">
    <property type="entry name" value="RIBOSOMAL_S27E"/>
    <property type="match status" value="1"/>
</dbReference>
<organism>
    <name type="scientific">Methanocaldococcus jannaschii (strain ATCC 43067 / DSM 2661 / JAL-1 / JCM 10045 / NBRC 100440)</name>
    <name type="common">Methanococcus jannaschii</name>
    <dbReference type="NCBI Taxonomy" id="243232"/>
    <lineage>
        <taxon>Archaea</taxon>
        <taxon>Methanobacteriati</taxon>
        <taxon>Methanobacteriota</taxon>
        <taxon>Methanomada group</taxon>
        <taxon>Methanococci</taxon>
        <taxon>Methanococcales</taxon>
        <taxon>Methanocaldococcaceae</taxon>
        <taxon>Methanocaldococcus</taxon>
    </lineage>
</organism>
<comment type="cofactor">
    <cofactor evidence="1">
        <name>Zn(2+)</name>
        <dbReference type="ChEBI" id="CHEBI:29105"/>
    </cofactor>
    <text evidence="1">Binds 1 zinc ion per subunit.</text>
</comment>
<comment type="subunit">
    <text evidence="1">Part of the 30S ribosomal subunit.</text>
</comment>
<comment type="similarity">
    <text evidence="1">Belongs to the eukaryotic ribosomal protein eS27 family.</text>
</comment>
<accession>P54028</accession>
<feature type="chain" id="PRO_0000149072" description="Small ribosomal subunit protein eS27">
    <location>
        <begin position="1"/>
        <end position="62"/>
    </location>
</feature>
<feature type="zinc finger region" description="C4-type" evidence="1">
    <location>
        <begin position="17"/>
        <end position="39"/>
    </location>
</feature>
<feature type="binding site" evidence="1">
    <location>
        <position position="17"/>
    </location>
    <ligand>
        <name>Zn(2+)</name>
        <dbReference type="ChEBI" id="CHEBI:29105"/>
    </ligand>
</feature>
<feature type="binding site" evidence="1">
    <location>
        <position position="20"/>
    </location>
    <ligand>
        <name>Zn(2+)</name>
        <dbReference type="ChEBI" id="CHEBI:29105"/>
    </ligand>
</feature>
<feature type="binding site" evidence="1">
    <location>
        <position position="36"/>
    </location>
    <ligand>
        <name>Zn(2+)</name>
        <dbReference type="ChEBI" id="CHEBI:29105"/>
    </ligand>
</feature>
<feature type="binding site" evidence="1">
    <location>
        <position position="39"/>
    </location>
    <ligand>
        <name>Zn(2+)</name>
        <dbReference type="ChEBI" id="CHEBI:29105"/>
    </ligand>
</feature>
<protein>
    <recommendedName>
        <fullName evidence="1">Small ribosomal subunit protein eS27</fullName>
    </recommendedName>
</protein>
<proteinExistence type="inferred from homology"/>
<gene>
    <name evidence="1" type="primary">rps27e</name>
    <name type="ordered locus">MJ0250</name>
</gene>
<reference key="1">
    <citation type="journal article" date="1996" name="Science">
        <title>Complete genome sequence of the methanogenic archaeon, Methanococcus jannaschii.</title>
        <authorList>
            <person name="Bult C.J."/>
            <person name="White O."/>
            <person name="Olsen G.J."/>
            <person name="Zhou L."/>
            <person name="Fleischmann R.D."/>
            <person name="Sutton G.G."/>
            <person name="Blake J.A."/>
            <person name="FitzGerald L.M."/>
            <person name="Clayton R.A."/>
            <person name="Gocayne J.D."/>
            <person name="Kerlavage A.R."/>
            <person name="Dougherty B.A."/>
            <person name="Tomb J.-F."/>
            <person name="Adams M.D."/>
            <person name="Reich C.I."/>
            <person name="Overbeek R."/>
            <person name="Kirkness E.F."/>
            <person name="Weinstock K.G."/>
            <person name="Merrick J.M."/>
            <person name="Glodek A."/>
            <person name="Scott J.L."/>
            <person name="Geoghagen N.S.M."/>
            <person name="Weidman J.F."/>
            <person name="Fuhrmann J.L."/>
            <person name="Nguyen D."/>
            <person name="Utterback T.R."/>
            <person name="Kelley J.M."/>
            <person name="Peterson J.D."/>
            <person name="Sadow P.W."/>
            <person name="Hanna M.C."/>
            <person name="Cotton M.D."/>
            <person name="Roberts K.M."/>
            <person name="Hurst M.A."/>
            <person name="Kaine B.P."/>
            <person name="Borodovsky M."/>
            <person name="Klenk H.-P."/>
            <person name="Fraser C.M."/>
            <person name="Smith H.O."/>
            <person name="Woese C.R."/>
            <person name="Venter J.C."/>
        </authorList>
    </citation>
    <scope>NUCLEOTIDE SEQUENCE [LARGE SCALE GENOMIC DNA]</scope>
    <source>
        <strain>ATCC 43067 / DSM 2661 / JAL-1 / JCM 10045 / NBRC 100440</strain>
    </source>
</reference>
<evidence type="ECO:0000255" key="1">
    <source>
        <dbReference type="HAMAP-Rule" id="MF_00371"/>
    </source>
</evidence>
<keyword id="KW-0479">Metal-binding</keyword>
<keyword id="KW-1185">Reference proteome</keyword>
<keyword id="KW-0687">Ribonucleoprotein</keyword>
<keyword id="KW-0689">Ribosomal protein</keyword>
<keyword id="KW-0862">Zinc</keyword>
<keyword id="KW-0863">Zinc-finger</keyword>
<name>RS27_METJA</name>